<protein>
    <recommendedName>
        <fullName>Kappa-casein</fullName>
    </recommendedName>
</protein>
<organism>
    <name type="scientific">Panthera uncia</name>
    <name type="common">Snow leopard</name>
    <name type="synonym">Uncia uncia</name>
    <dbReference type="NCBI Taxonomy" id="29064"/>
    <lineage>
        <taxon>Eukaryota</taxon>
        <taxon>Metazoa</taxon>
        <taxon>Chordata</taxon>
        <taxon>Craniata</taxon>
        <taxon>Vertebrata</taxon>
        <taxon>Euteleostomi</taxon>
        <taxon>Mammalia</taxon>
        <taxon>Eutheria</taxon>
        <taxon>Laurasiatheria</taxon>
        <taxon>Carnivora</taxon>
        <taxon>Feliformia</taxon>
        <taxon>Felidae</taxon>
        <taxon>Pantherinae</taxon>
        <taxon>Panthera</taxon>
    </lineage>
</organism>
<dbReference type="EMBL" id="U53894">
    <property type="protein sequence ID" value="AAB08421.1"/>
    <property type="molecule type" value="Genomic_DNA"/>
</dbReference>
<dbReference type="GlyCosmos" id="Q29150">
    <property type="glycosylation" value="6 sites, No reported glycans"/>
</dbReference>
<dbReference type="GO" id="GO:0005615">
    <property type="term" value="C:extracellular space"/>
    <property type="evidence" value="ECO:0007669"/>
    <property type="project" value="TreeGrafter"/>
</dbReference>
<dbReference type="GO" id="GO:0007595">
    <property type="term" value="P:lactation"/>
    <property type="evidence" value="ECO:0007669"/>
    <property type="project" value="TreeGrafter"/>
</dbReference>
<dbReference type="GO" id="GO:0050821">
    <property type="term" value="P:protein stabilization"/>
    <property type="evidence" value="ECO:0007669"/>
    <property type="project" value="TreeGrafter"/>
</dbReference>
<dbReference type="InterPro" id="IPR000117">
    <property type="entry name" value="Casein_kappa"/>
</dbReference>
<dbReference type="PANTHER" id="PTHR11470">
    <property type="entry name" value="KAPPA CASEIN"/>
    <property type="match status" value="1"/>
</dbReference>
<dbReference type="PANTHER" id="PTHR11470:SF2">
    <property type="entry name" value="KAPPA-CASEIN"/>
    <property type="match status" value="1"/>
</dbReference>
<dbReference type="Pfam" id="PF00997">
    <property type="entry name" value="Casein_kappa"/>
    <property type="match status" value="1"/>
</dbReference>
<reference key="1">
    <citation type="journal article" date="1996" name="Mol. Biol. Evol.">
        <title>Evidence from milk casein genes that cetaceans are close relatives of hippopotamid artiodactyls.</title>
        <authorList>
            <person name="Gatesy J."/>
            <person name="Hayashi C."/>
            <person name="Cronin M.A."/>
            <person name="Arctander P."/>
        </authorList>
    </citation>
    <scope>NUCLEOTIDE SEQUENCE [GENOMIC DNA]</scope>
</reference>
<feature type="chain" id="PRO_0000144122" description="Kappa-casein">
    <location>
        <begin position="1" status="less than"/>
        <end position="146"/>
    </location>
</feature>
<feature type="modified residue" description="Phosphothreonine" evidence="1">
    <location>
        <position position="121"/>
    </location>
</feature>
<feature type="modified residue" description="Phosphoserine; alternate" evidence="1">
    <location>
        <position position="125"/>
    </location>
</feature>
<feature type="modified residue" description="Phosphoserine" evidence="2">
    <location>
        <position position="143"/>
    </location>
</feature>
<feature type="glycosylation site" description="O-linked (GalNAc...) threonine" evidence="1">
    <location>
        <position position="97"/>
    </location>
</feature>
<feature type="glycosylation site" description="O-linked (GalNAc...) threonine" evidence="1">
    <location>
        <position position="107"/>
    </location>
</feature>
<feature type="glycosylation site" description="O-linked (GalNAc...) threonine" evidence="1">
    <location>
        <position position="112"/>
    </location>
</feature>
<feature type="glycosylation site" description="O-linked (GalNAc...) threonine" evidence="1">
    <location>
        <position position="118"/>
    </location>
</feature>
<feature type="glycosylation site" description="O-linked (GalNAc...) serine; alternate" evidence="1">
    <location>
        <position position="125"/>
    </location>
</feature>
<feature type="glycosylation site" description="O-linked (GalNAc...) threonine" evidence="1">
    <location>
        <position position="142"/>
    </location>
</feature>
<feature type="non-terminal residue">
    <location>
        <position position="1"/>
    </location>
</feature>
<proteinExistence type="evidence at transcript level"/>
<name>CASK_PANUN</name>
<sequence>LLNQKTAKYIPVHYVLSNYPHYEPSYYPHKPAVPVNNQYMPYPYYAKPVAVRPHVQIPQWQVLPNTYTPTVVRHPHLPASFIVIPPKKIQDKTGNPTINTIATAEPTLTPTTEPIVNTVVTTEASSEFTITSTPETTTVPVTSTMV</sequence>
<accession>Q29150</accession>
<gene>
    <name type="primary">CSN3</name>
    <name type="synonym">CSN10</name>
    <name type="synonym">CSNK</name>
</gene>
<evidence type="ECO:0000250" key="1">
    <source>
        <dbReference type="UniProtKB" id="P02668"/>
    </source>
</evidence>
<evidence type="ECO:0000250" key="2">
    <source>
        <dbReference type="UniProtKB" id="P02670"/>
    </source>
</evidence>
<evidence type="ECO:0000305" key="3"/>
<comment type="function">
    <text>Kappa-casein stabilizes micelle formation, preventing casein precipitation in milk.</text>
</comment>
<comment type="subcellular location">
    <subcellularLocation>
        <location>Secreted</location>
    </subcellularLocation>
</comment>
<comment type="tissue specificity">
    <text>Mammary gland specific. Secreted in milk.</text>
</comment>
<comment type="similarity">
    <text evidence="3">Belongs to the kappa-casein family.</text>
</comment>
<keyword id="KW-0325">Glycoprotein</keyword>
<keyword id="KW-0494">Milk protein</keyword>
<keyword id="KW-0597">Phosphoprotein</keyword>
<keyword id="KW-0964">Secreted</keyword>